<gene>
    <name type="ordered locus">MPN_041</name>
    <name type="ORF">B01_orf186L</name>
    <name type="ORF">MP113</name>
</gene>
<comment type="similarity">
    <text evidence="1">Belongs to the MG032/MG096/MG288 family.</text>
</comment>
<sequence>MRDAIDKYATYSVSRLNNVTTYLPGKVDGSGKDQIWISPNNFQVNREWGNGAHFKDKAYRFNFDVKVEYDVEVKAAWWTALFRGSIPGYWKGKFKVTYSFNGEVPSWNYGDKQVRPPQYSFKEQEKQLLFVPRHVQKIEAEGKHLEIINPFLKDQHLDFFEHYHPDLTQPLDMVSYLMYAIADKVK</sequence>
<accession>P75073</accession>
<protein>
    <recommendedName>
        <fullName>Uncharacterized protein MPN_041</fullName>
    </recommendedName>
</protein>
<evidence type="ECO:0000305" key="1"/>
<keyword id="KW-1185">Reference proteome</keyword>
<feature type="chain" id="PRO_0000215250" description="Uncharacterized protein MPN_041">
    <location>
        <begin position="1"/>
        <end position="186"/>
    </location>
</feature>
<name>Y041_MYCPN</name>
<dbReference type="EMBL" id="U00089">
    <property type="protein sequence ID" value="AAB95761.1"/>
    <property type="molecule type" value="Genomic_DNA"/>
</dbReference>
<dbReference type="PIR" id="S73439">
    <property type="entry name" value="S73439"/>
</dbReference>
<dbReference type="RefSeq" id="WP_010874398.1">
    <property type="nucleotide sequence ID" value="NZ_OU342337.1"/>
</dbReference>
<dbReference type="IntAct" id="P75073">
    <property type="interactions" value="1"/>
</dbReference>
<dbReference type="STRING" id="272634.MPN_041"/>
<dbReference type="EnsemblBacteria" id="AAB95761">
    <property type="protein sequence ID" value="AAB95761"/>
    <property type="gene ID" value="MPN_041"/>
</dbReference>
<dbReference type="KEGG" id="mpn:MPN_041"/>
<dbReference type="HOGENOM" id="CLU_1452960_0_0_14"/>
<dbReference type="Proteomes" id="UP000000808">
    <property type="component" value="Chromosome"/>
</dbReference>
<dbReference type="InterPro" id="IPR004306">
    <property type="entry name" value="DUF237"/>
</dbReference>
<dbReference type="Pfam" id="PF03072">
    <property type="entry name" value="DUF237"/>
    <property type="match status" value="1"/>
</dbReference>
<reference key="1">
    <citation type="journal article" date="1996" name="Nucleic Acids Res.">
        <title>Complete sequence analysis of the genome of the bacterium Mycoplasma pneumoniae.</title>
        <authorList>
            <person name="Himmelreich R."/>
            <person name="Hilbert H."/>
            <person name="Plagens H."/>
            <person name="Pirkl E."/>
            <person name="Li B.-C."/>
            <person name="Herrmann R."/>
        </authorList>
    </citation>
    <scope>NUCLEOTIDE SEQUENCE [LARGE SCALE GENOMIC DNA]</scope>
    <source>
        <strain>ATCC 29342 / M129 / Subtype 1</strain>
    </source>
</reference>
<proteinExistence type="inferred from homology"/>
<organism>
    <name type="scientific">Mycoplasma pneumoniae (strain ATCC 29342 / M129 / Subtype 1)</name>
    <name type="common">Mycoplasmoides pneumoniae</name>
    <dbReference type="NCBI Taxonomy" id="272634"/>
    <lineage>
        <taxon>Bacteria</taxon>
        <taxon>Bacillati</taxon>
        <taxon>Mycoplasmatota</taxon>
        <taxon>Mycoplasmoidales</taxon>
        <taxon>Mycoplasmoidaceae</taxon>
        <taxon>Mycoplasmoides</taxon>
    </lineage>
</organism>